<protein>
    <recommendedName>
        <fullName evidence="2">Adenylate kinase</fullName>
        <shortName evidence="2">AK</shortName>
        <ecNumber evidence="2">2.7.4.3</ecNumber>
    </recommendedName>
    <alternativeName>
        <fullName evidence="2">ATP-AMP transphosphorylase</fullName>
    </alternativeName>
    <alternativeName>
        <fullName evidence="2">ATP:AMP phosphotransferase</fullName>
    </alternativeName>
    <alternativeName>
        <fullName evidence="2">Adenylate monophosphate kinase</fullName>
    </alternativeName>
</protein>
<sequence>MRIILLGAPGAGKGTQAQFIMEKYGIPQISTGDMLRAAVKSGSELGKQAKDIMDAGKLVTDELVIALVKERIAQEDCRNGFLLDGFPRTIPQADAMKEAGINVDYVLEFDVPDELIVDRIVGRRVHAPSGRVYHVKFNPPKVEGKDDVTGEELTTRKDDQEETVRKRLVEYHQMTAPLIGYYSKEAEAGNTKYAKVDGTKPVAEVRADLEKILG</sequence>
<comment type="function">
    <text evidence="2">Catalyzes the reversible transfer of the terminal phosphate group between ATP and AMP. Plays an important role in cellular energy homeostasis and in adenine nucleotide metabolism.</text>
</comment>
<comment type="catalytic activity">
    <reaction evidence="2">
        <text>AMP + ATP = 2 ADP</text>
        <dbReference type="Rhea" id="RHEA:12973"/>
        <dbReference type="ChEBI" id="CHEBI:30616"/>
        <dbReference type="ChEBI" id="CHEBI:456215"/>
        <dbReference type="ChEBI" id="CHEBI:456216"/>
        <dbReference type="EC" id="2.7.4.3"/>
    </reaction>
</comment>
<comment type="pathway">
    <text evidence="2">Purine metabolism; AMP biosynthesis via salvage pathway; AMP from ADP: step 1/1.</text>
</comment>
<comment type="subunit">
    <text evidence="2">Monomer.</text>
</comment>
<comment type="subcellular location">
    <subcellularLocation>
        <location evidence="2">Cytoplasm</location>
    </subcellularLocation>
</comment>
<comment type="domain">
    <text evidence="2">Consists of three domains, a large central CORE domain and two small peripheral domains, NMPbind and LID, which undergo movements during catalysis. The LID domain closes over the site of phosphoryl transfer upon ATP binding. Assembling and dissambling the active center during each catalytic cycle provides an effective means to prevent ATP hydrolysis.</text>
</comment>
<comment type="similarity">
    <text evidence="2">Belongs to the adenylate kinase family.</text>
</comment>
<dbReference type="EC" id="2.7.4.3" evidence="2"/>
<dbReference type="EMBL" id="CU928163">
    <property type="protein sequence ID" value="CAR11728.1"/>
    <property type="molecule type" value="Genomic_DNA"/>
</dbReference>
<dbReference type="RefSeq" id="WP_001220233.1">
    <property type="nucleotide sequence ID" value="NC_011751.1"/>
</dbReference>
<dbReference type="RefSeq" id="YP_002411276.1">
    <property type="nucleotide sequence ID" value="NC_011751.1"/>
</dbReference>
<dbReference type="SMR" id="B7N927"/>
<dbReference type="STRING" id="585056.ECUMN_0513"/>
<dbReference type="GeneID" id="75170492"/>
<dbReference type="KEGG" id="eum:ECUMN_0513"/>
<dbReference type="PATRIC" id="fig|585056.7.peg.720"/>
<dbReference type="HOGENOM" id="CLU_032354_1_2_6"/>
<dbReference type="UniPathway" id="UPA00588">
    <property type="reaction ID" value="UER00649"/>
</dbReference>
<dbReference type="Proteomes" id="UP000007097">
    <property type="component" value="Chromosome"/>
</dbReference>
<dbReference type="GO" id="GO:0005737">
    <property type="term" value="C:cytoplasm"/>
    <property type="evidence" value="ECO:0007669"/>
    <property type="project" value="UniProtKB-SubCell"/>
</dbReference>
<dbReference type="GO" id="GO:0004017">
    <property type="term" value="F:adenylate kinase activity"/>
    <property type="evidence" value="ECO:0007669"/>
    <property type="project" value="UniProtKB-UniRule"/>
</dbReference>
<dbReference type="GO" id="GO:0005524">
    <property type="term" value="F:ATP binding"/>
    <property type="evidence" value="ECO:0007669"/>
    <property type="project" value="UniProtKB-UniRule"/>
</dbReference>
<dbReference type="GO" id="GO:0044209">
    <property type="term" value="P:AMP salvage"/>
    <property type="evidence" value="ECO:0007669"/>
    <property type="project" value="UniProtKB-UniRule"/>
</dbReference>
<dbReference type="CDD" id="cd01428">
    <property type="entry name" value="ADK"/>
    <property type="match status" value="1"/>
</dbReference>
<dbReference type="FunFam" id="3.40.50.300:FF:000106">
    <property type="entry name" value="Adenylate kinase mitochondrial"/>
    <property type="match status" value="1"/>
</dbReference>
<dbReference type="Gene3D" id="3.40.50.300">
    <property type="entry name" value="P-loop containing nucleotide triphosphate hydrolases"/>
    <property type="match status" value="1"/>
</dbReference>
<dbReference type="HAMAP" id="MF_00235">
    <property type="entry name" value="Adenylate_kinase_Adk"/>
    <property type="match status" value="1"/>
</dbReference>
<dbReference type="InterPro" id="IPR006259">
    <property type="entry name" value="Adenyl_kin_sub"/>
</dbReference>
<dbReference type="InterPro" id="IPR000850">
    <property type="entry name" value="Adenylat/UMP-CMP_kin"/>
</dbReference>
<dbReference type="InterPro" id="IPR033690">
    <property type="entry name" value="Adenylat_kinase_CS"/>
</dbReference>
<dbReference type="InterPro" id="IPR007862">
    <property type="entry name" value="Adenylate_kinase_lid-dom"/>
</dbReference>
<dbReference type="InterPro" id="IPR027417">
    <property type="entry name" value="P-loop_NTPase"/>
</dbReference>
<dbReference type="NCBIfam" id="TIGR01351">
    <property type="entry name" value="adk"/>
    <property type="match status" value="1"/>
</dbReference>
<dbReference type="NCBIfam" id="NF001379">
    <property type="entry name" value="PRK00279.1-1"/>
    <property type="match status" value="1"/>
</dbReference>
<dbReference type="NCBIfam" id="NF001380">
    <property type="entry name" value="PRK00279.1-2"/>
    <property type="match status" value="1"/>
</dbReference>
<dbReference type="NCBIfam" id="NF001381">
    <property type="entry name" value="PRK00279.1-3"/>
    <property type="match status" value="1"/>
</dbReference>
<dbReference type="NCBIfam" id="NF011100">
    <property type="entry name" value="PRK14527.1"/>
    <property type="match status" value="1"/>
</dbReference>
<dbReference type="PANTHER" id="PTHR23359">
    <property type="entry name" value="NUCLEOTIDE KINASE"/>
    <property type="match status" value="1"/>
</dbReference>
<dbReference type="Pfam" id="PF00406">
    <property type="entry name" value="ADK"/>
    <property type="match status" value="1"/>
</dbReference>
<dbReference type="Pfam" id="PF05191">
    <property type="entry name" value="ADK_lid"/>
    <property type="match status" value="1"/>
</dbReference>
<dbReference type="PRINTS" id="PR00094">
    <property type="entry name" value="ADENYLTKNASE"/>
</dbReference>
<dbReference type="SUPFAM" id="SSF52540">
    <property type="entry name" value="P-loop containing nucleoside triphosphate hydrolases"/>
    <property type="match status" value="1"/>
</dbReference>
<dbReference type="PROSITE" id="PS00113">
    <property type="entry name" value="ADENYLATE_KINASE"/>
    <property type="match status" value="1"/>
</dbReference>
<feature type="chain" id="PRO_1000191144" description="Adenylate kinase">
    <location>
        <begin position="1"/>
        <end position="214"/>
    </location>
</feature>
<feature type="region of interest" description="NMP" evidence="2">
    <location>
        <begin position="30"/>
        <end position="59"/>
    </location>
</feature>
<feature type="region of interest" description="LID">
    <location>
        <begin position="122"/>
        <end position="159"/>
    </location>
</feature>
<feature type="binding site" evidence="2">
    <location>
        <begin position="10"/>
        <end position="15"/>
    </location>
    <ligand>
        <name>ATP</name>
        <dbReference type="ChEBI" id="CHEBI:30616"/>
    </ligand>
</feature>
<feature type="binding site" evidence="2">
    <location>
        <position position="31"/>
    </location>
    <ligand>
        <name>AMP</name>
        <dbReference type="ChEBI" id="CHEBI:456215"/>
    </ligand>
</feature>
<feature type="binding site" evidence="2">
    <location>
        <position position="36"/>
    </location>
    <ligand>
        <name>AMP</name>
        <dbReference type="ChEBI" id="CHEBI:456215"/>
    </ligand>
</feature>
<feature type="binding site" evidence="2">
    <location>
        <begin position="57"/>
        <end position="59"/>
    </location>
    <ligand>
        <name>AMP</name>
        <dbReference type="ChEBI" id="CHEBI:456215"/>
    </ligand>
</feature>
<feature type="binding site" evidence="2">
    <location>
        <begin position="85"/>
        <end position="88"/>
    </location>
    <ligand>
        <name>AMP</name>
        <dbReference type="ChEBI" id="CHEBI:456215"/>
    </ligand>
</feature>
<feature type="binding site" evidence="2">
    <location>
        <position position="92"/>
    </location>
    <ligand>
        <name>AMP</name>
        <dbReference type="ChEBI" id="CHEBI:456215"/>
    </ligand>
</feature>
<feature type="binding site" evidence="2">
    <location>
        <position position="123"/>
    </location>
    <ligand>
        <name>ATP</name>
        <dbReference type="ChEBI" id="CHEBI:30616"/>
    </ligand>
</feature>
<feature type="binding site" evidence="2">
    <location>
        <begin position="132"/>
        <end position="133"/>
    </location>
    <ligand>
        <name>ATP</name>
        <dbReference type="ChEBI" id="CHEBI:30616"/>
    </ligand>
</feature>
<feature type="binding site" evidence="2">
    <location>
        <position position="156"/>
    </location>
    <ligand>
        <name>AMP</name>
        <dbReference type="ChEBI" id="CHEBI:456215"/>
    </ligand>
</feature>
<feature type="binding site" evidence="2">
    <location>
        <position position="167"/>
    </location>
    <ligand>
        <name>AMP</name>
        <dbReference type="ChEBI" id="CHEBI:456215"/>
    </ligand>
</feature>
<feature type="binding site" evidence="2">
    <location>
        <position position="200"/>
    </location>
    <ligand>
        <name>ATP</name>
        <dbReference type="ChEBI" id="CHEBI:30616"/>
    </ligand>
</feature>
<feature type="modified residue" description="N6-acetyllysine" evidence="1">
    <location>
        <position position="192"/>
    </location>
</feature>
<name>KAD_ECOLU</name>
<reference key="1">
    <citation type="journal article" date="2009" name="PLoS Genet.">
        <title>Organised genome dynamics in the Escherichia coli species results in highly diverse adaptive paths.</title>
        <authorList>
            <person name="Touchon M."/>
            <person name="Hoede C."/>
            <person name="Tenaillon O."/>
            <person name="Barbe V."/>
            <person name="Baeriswyl S."/>
            <person name="Bidet P."/>
            <person name="Bingen E."/>
            <person name="Bonacorsi S."/>
            <person name="Bouchier C."/>
            <person name="Bouvet O."/>
            <person name="Calteau A."/>
            <person name="Chiapello H."/>
            <person name="Clermont O."/>
            <person name="Cruveiller S."/>
            <person name="Danchin A."/>
            <person name="Diard M."/>
            <person name="Dossat C."/>
            <person name="Karoui M.E."/>
            <person name="Frapy E."/>
            <person name="Garry L."/>
            <person name="Ghigo J.M."/>
            <person name="Gilles A.M."/>
            <person name="Johnson J."/>
            <person name="Le Bouguenec C."/>
            <person name="Lescat M."/>
            <person name="Mangenot S."/>
            <person name="Martinez-Jehanne V."/>
            <person name="Matic I."/>
            <person name="Nassif X."/>
            <person name="Oztas S."/>
            <person name="Petit M.A."/>
            <person name="Pichon C."/>
            <person name="Rouy Z."/>
            <person name="Ruf C.S."/>
            <person name="Schneider D."/>
            <person name="Tourret J."/>
            <person name="Vacherie B."/>
            <person name="Vallenet D."/>
            <person name="Medigue C."/>
            <person name="Rocha E.P.C."/>
            <person name="Denamur E."/>
        </authorList>
    </citation>
    <scope>NUCLEOTIDE SEQUENCE [LARGE SCALE GENOMIC DNA]</scope>
    <source>
        <strain>UMN026 / ExPEC</strain>
    </source>
</reference>
<proteinExistence type="inferred from homology"/>
<gene>
    <name evidence="2" type="primary">adk</name>
    <name type="ordered locus">ECUMN_0513</name>
</gene>
<evidence type="ECO:0000250" key="1"/>
<evidence type="ECO:0000255" key="2">
    <source>
        <dbReference type="HAMAP-Rule" id="MF_00235"/>
    </source>
</evidence>
<organism>
    <name type="scientific">Escherichia coli O17:K52:H18 (strain UMN026 / ExPEC)</name>
    <dbReference type="NCBI Taxonomy" id="585056"/>
    <lineage>
        <taxon>Bacteria</taxon>
        <taxon>Pseudomonadati</taxon>
        <taxon>Pseudomonadota</taxon>
        <taxon>Gammaproteobacteria</taxon>
        <taxon>Enterobacterales</taxon>
        <taxon>Enterobacteriaceae</taxon>
        <taxon>Escherichia</taxon>
    </lineage>
</organism>
<keyword id="KW-0007">Acetylation</keyword>
<keyword id="KW-0067">ATP-binding</keyword>
<keyword id="KW-0963">Cytoplasm</keyword>
<keyword id="KW-0418">Kinase</keyword>
<keyword id="KW-0545">Nucleotide biosynthesis</keyword>
<keyword id="KW-0547">Nucleotide-binding</keyword>
<keyword id="KW-0808">Transferase</keyword>
<accession>B7N927</accession>